<geneLocation type="chloroplast"/>
<accession>Q9TLA3</accession>
<proteinExistence type="inferred from homology"/>
<sequence length="738" mass="83478">MEQTYQYAWIIPFVPLPVPMLIGVGLLLFPTATKNLRRMWAFPSILLLSIVMIFSINLSIQQIDSSCIYQYVWSWTINNDFSLEFGYLIDPLTSIMSMLITTVGIMVLIYSDNYMAHDQGYLRFFASMSFFSTSMLGLVTSSNLIQIYIFWELVGMCSYLLIGFWFTRPLAANACQKAFVTNRVGDFGLLLGILGFYWITGSFEFRDLFEILNNFISKNEVNSSFGTLCAALLFTGAVAKSAQFPLHVWLPDAMEGPTPISALIHAATMVAAGIFLVARLLPLFIVIPYIMNFISFIGIITVLLGATLALAQKDIKRGLAYSTMSQLGYMMLALGMGSYRSALFHLITHAYSKALLFLGSGSIIHSMETIVGYSPDKSQNMVLMGGLRKHVPITQISFLLGTLSLCGIPPLACFWSKDEILNDSWLYSPIFAIIAWSTAGLTAFYMFRIYLLTFEGHLNVHFQNYSGKQNTPFYSISLWGKGDSKRINKNFRLLKMNNSKSSSFFSKKPYRSGKNVRNRVGPFLTIVHFENQKSYSYPYESDNTMLFPLLVLGILTLFVGSLGIPFNQELDILTKWLTPSINLLHQKWNDSIDWYEFWKDASFSVSIAYFGIFIASFLYKPIYSSFPNFFLINLFVKTGPKRSLWDKILNGLYNWSYNRAYIDAFYTTSLTGAVRGLAQVTHFFDRRVIDGITNGVGVMSFFVGEGIKYVGGGRISSYLFFYLSCVSIFLLGLYFPVF</sequence>
<dbReference type="EC" id="7.1.1.-"/>
<dbReference type="EMBL" id="AF130164">
    <property type="protein sequence ID" value="AAF08126.1"/>
    <property type="molecule type" value="Genomic_DNA"/>
</dbReference>
<dbReference type="SMR" id="Q9TLA3"/>
<dbReference type="GO" id="GO:0009535">
    <property type="term" value="C:chloroplast thylakoid membrane"/>
    <property type="evidence" value="ECO:0007669"/>
    <property type="project" value="UniProtKB-SubCell"/>
</dbReference>
<dbReference type="GO" id="GO:0008137">
    <property type="term" value="F:NADH dehydrogenase (ubiquinone) activity"/>
    <property type="evidence" value="ECO:0007669"/>
    <property type="project" value="InterPro"/>
</dbReference>
<dbReference type="GO" id="GO:0048038">
    <property type="term" value="F:quinone binding"/>
    <property type="evidence" value="ECO:0007669"/>
    <property type="project" value="UniProtKB-KW"/>
</dbReference>
<dbReference type="GO" id="GO:0042773">
    <property type="term" value="P:ATP synthesis coupled electron transport"/>
    <property type="evidence" value="ECO:0007669"/>
    <property type="project" value="InterPro"/>
</dbReference>
<dbReference type="GO" id="GO:0015990">
    <property type="term" value="P:electron transport coupled proton transport"/>
    <property type="evidence" value="ECO:0007669"/>
    <property type="project" value="TreeGrafter"/>
</dbReference>
<dbReference type="Gene3D" id="1.20.5.2700">
    <property type="match status" value="1"/>
</dbReference>
<dbReference type="InterPro" id="IPR002128">
    <property type="entry name" value="NADH_UbQ_OxRdtase_chlpt_su5_C"/>
</dbReference>
<dbReference type="InterPro" id="IPR018393">
    <property type="entry name" value="NADHpl_OxRdtase_5_subgr"/>
</dbReference>
<dbReference type="InterPro" id="IPR001750">
    <property type="entry name" value="ND/Mrp_TM"/>
</dbReference>
<dbReference type="InterPro" id="IPR003945">
    <property type="entry name" value="NU5C-like"/>
</dbReference>
<dbReference type="InterPro" id="IPR001516">
    <property type="entry name" value="Proton_antipo_N"/>
</dbReference>
<dbReference type="NCBIfam" id="TIGR01974">
    <property type="entry name" value="NDH_I_L"/>
    <property type="match status" value="1"/>
</dbReference>
<dbReference type="NCBIfam" id="NF005141">
    <property type="entry name" value="PRK06590.1"/>
    <property type="match status" value="1"/>
</dbReference>
<dbReference type="PANTHER" id="PTHR42829">
    <property type="entry name" value="NADH-UBIQUINONE OXIDOREDUCTASE CHAIN 5"/>
    <property type="match status" value="1"/>
</dbReference>
<dbReference type="PANTHER" id="PTHR42829:SF2">
    <property type="entry name" value="NADH-UBIQUINONE OXIDOREDUCTASE CHAIN 5"/>
    <property type="match status" value="1"/>
</dbReference>
<dbReference type="Pfam" id="PF01010">
    <property type="entry name" value="Proton_antipo_C"/>
    <property type="match status" value="1"/>
</dbReference>
<dbReference type="Pfam" id="PF00361">
    <property type="entry name" value="Proton_antipo_M"/>
    <property type="match status" value="1"/>
</dbReference>
<dbReference type="Pfam" id="PF00662">
    <property type="entry name" value="Proton_antipo_N"/>
    <property type="match status" value="1"/>
</dbReference>
<dbReference type="PRINTS" id="PR01434">
    <property type="entry name" value="NADHDHGNASE5"/>
</dbReference>
<dbReference type="PRINTS" id="PR01435">
    <property type="entry name" value="NPOXDRDTASE5"/>
</dbReference>
<name>NU5C_LIGVU</name>
<keyword id="KW-0150">Chloroplast</keyword>
<keyword id="KW-0472">Membrane</keyword>
<keyword id="KW-0520">NAD</keyword>
<keyword id="KW-0521">NADP</keyword>
<keyword id="KW-0934">Plastid</keyword>
<keyword id="KW-0618">Plastoquinone</keyword>
<keyword id="KW-0874">Quinone</keyword>
<keyword id="KW-0793">Thylakoid</keyword>
<keyword id="KW-1278">Translocase</keyword>
<keyword id="KW-0812">Transmembrane</keyword>
<keyword id="KW-1133">Transmembrane helix</keyword>
<keyword id="KW-0813">Transport</keyword>
<organism>
    <name type="scientific">Ligustrum vulgare</name>
    <name type="common">Common privet</name>
    <name type="synonym">Ligustrum insulare</name>
    <dbReference type="NCBI Taxonomy" id="13597"/>
    <lineage>
        <taxon>Eukaryota</taxon>
        <taxon>Viridiplantae</taxon>
        <taxon>Streptophyta</taxon>
        <taxon>Embryophyta</taxon>
        <taxon>Tracheophyta</taxon>
        <taxon>Spermatophyta</taxon>
        <taxon>Magnoliopsida</taxon>
        <taxon>eudicotyledons</taxon>
        <taxon>Gunneridae</taxon>
        <taxon>Pentapetalae</taxon>
        <taxon>asterids</taxon>
        <taxon>lamiids</taxon>
        <taxon>Lamiales</taxon>
        <taxon>Oleaceae</taxon>
        <taxon>Oleeae</taxon>
        <taxon>Ligustrum</taxon>
    </lineage>
</organism>
<reference key="1">
    <citation type="journal article" date="2000" name="Mol. Phylogenet. Evol.">
        <title>The phylogeny of the asteridae sensu lato based on chloroplast ndhF gene sequences.</title>
        <authorList>
            <person name="Olmstead R.G."/>
            <person name="Kim K.-J."/>
            <person name="Jansen R.K."/>
            <person name="Wagstaff S.J."/>
        </authorList>
    </citation>
    <scope>NUCLEOTIDE SEQUENCE [GENOMIC DNA]</scope>
</reference>
<gene>
    <name type="primary">ndhF</name>
</gene>
<evidence type="ECO:0000250" key="1"/>
<evidence type="ECO:0000255" key="2"/>
<evidence type="ECO:0000305" key="3"/>
<comment type="function">
    <text evidence="1">NDH shuttles electrons from NAD(P)H:plastoquinone, via FMN and iron-sulfur (Fe-S) centers, to quinones in the photosynthetic chain and possibly in a chloroplast respiratory chain. The immediate electron acceptor for the enzyme in this species is believed to be plastoquinone. Couples the redox reaction to proton translocation, and thus conserves the redox energy in a proton gradient (By similarity).</text>
</comment>
<comment type="catalytic activity">
    <reaction>
        <text>a plastoquinone + NADH + (n+1) H(+)(in) = a plastoquinol + NAD(+) + n H(+)(out)</text>
        <dbReference type="Rhea" id="RHEA:42608"/>
        <dbReference type="Rhea" id="RHEA-COMP:9561"/>
        <dbReference type="Rhea" id="RHEA-COMP:9562"/>
        <dbReference type="ChEBI" id="CHEBI:15378"/>
        <dbReference type="ChEBI" id="CHEBI:17757"/>
        <dbReference type="ChEBI" id="CHEBI:57540"/>
        <dbReference type="ChEBI" id="CHEBI:57945"/>
        <dbReference type="ChEBI" id="CHEBI:62192"/>
    </reaction>
</comment>
<comment type="catalytic activity">
    <reaction>
        <text>a plastoquinone + NADPH + (n+1) H(+)(in) = a plastoquinol + NADP(+) + n H(+)(out)</text>
        <dbReference type="Rhea" id="RHEA:42612"/>
        <dbReference type="Rhea" id="RHEA-COMP:9561"/>
        <dbReference type="Rhea" id="RHEA-COMP:9562"/>
        <dbReference type="ChEBI" id="CHEBI:15378"/>
        <dbReference type="ChEBI" id="CHEBI:17757"/>
        <dbReference type="ChEBI" id="CHEBI:57783"/>
        <dbReference type="ChEBI" id="CHEBI:58349"/>
        <dbReference type="ChEBI" id="CHEBI:62192"/>
    </reaction>
</comment>
<comment type="subunit">
    <text evidence="1">NDH is composed of at least 16 different subunits, 5 of which are encoded in the nucleus.</text>
</comment>
<comment type="subcellular location">
    <subcellularLocation>
        <location evidence="1">Plastid</location>
        <location evidence="1">Chloroplast thylakoid membrane</location>
        <topology evidence="1">Multi-pass membrane protein</topology>
    </subcellularLocation>
</comment>
<comment type="similarity">
    <text evidence="3">Belongs to the complex I subunit 5 family.</text>
</comment>
<protein>
    <recommendedName>
        <fullName>NAD(P)H-quinone oxidoreductase subunit 5, chloroplastic</fullName>
        <ecNumber>7.1.1.-</ecNumber>
    </recommendedName>
    <alternativeName>
        <fullName>NAD(P)H dehydrogenase subunit 5</fullName>
    </alternativeName>
    <alternativeName>
        <fullName>NADH-plastoquinone oxidoreductase subunit 5</fullName>
    </alternativeName>
</protein>
<feature type="chain" id="PRO_0000118188" description="NAD(P)H-quinone oxidoreductase subunit 5, chloroplastic">
    <location>
        <begin position="1"/>
        <end position="738"/>
    </location>
</feature>
<feature type="transmembrane region" description="Helical" evidence="2">
    <location>
        <begin position="9"/>
        <end position="29"/>
    </location>
</feature>
<feature type="transmembrane region" description="Helical" evidence="2">
    <location>
        <begin position="40"/>
        <end position="60"/>
    </location>
</feature>
<feature type="transmembrane region" description="Helical" evidence="2">
    <location>
        <begin position="89"/>
        <end position="109"/>
    </location>
</feature>
<feature type="transmembrane region" description="Helical" evidence="2">
    <location>
        <begin position="125"/>
        <end position="145"/>
    </location>
</feature>
<feature type="transmembrane region" description="Helical" evidence="2">
    <location>
        <begin position="147"/>
        <end position="167"/>
    </location>
</feature>
<feature type="transmembrane region" description="Helical" evidence="2">
    <location>
        <begin position="185"/>
        <end position="205"/>
    </location>
</feature>
<feature type="transmembrane region" description="Helical" evidence="2">
    <location>
        <begin position="230"/>
        <end position="250"/>
    </location>
</feature>
<feature type="transmembrane region" description="Helical" evidence="2">
    <location>
        <begin position="258"/>
        <end position="278"/>
    </location>
</feature>
<feature type="transmembrane region" description="Helical" evidence="2">
    <location>
        <begin position="280"/>
        <end position="300"/>
    </location>
</feature>
<feature type="transmembrane region" description="Helical" evidence="2">
    <location>
        <begin position="327"/>
        <end position="347"/>
    </location>
</feature>
<feature type="transmembrane region" description="Helical" evidence="2">
    <location>
        <begin position="354"/>
        <end position="374"/>
    </location>
</feature>
<feature type="transmembrane region" description="Helical" evidence="2">
    <location>
        <begin position="396"/>
        <end position="416"/>
    </location>
</feature>
<feature type="transmembrane region" description="Helical" evidence="2">
    <location>
        <begin position="425"/>
        <end position="445"/>
    </location>
</feature>
<feature type="transmembrane region" description="Helical" evidence="2">
    <location>
        <begin position="546"/>
        <end position="566"/>
    </location>
</feature>
<feature type="transmembrane region" description="Helical" evidence="2">
    <location>
        <begin position="603"/>
        <end position="623"/>
    </location>
</feature>
<feature type="transmembrane region" description="Helical" evidence="2">
    <location>
        <begin position="718"/>
        <end position="738"/>
    </location>
</feature>